<evidence type="ECO:0000256" key="1">
    <source>
        <dbReference type="SAM" id="MobiDB-lite"/>
    </source>
</evidence>
<protein>
    <recommendedName>
        <fullName>Putative uncharacterized protein DDB_G0292292</fullName>
    </recommendedName>
</protein>
<gene>
    <name type="ORF">DDB_G0292292</name>
</gene>
<keyword id="KW-1185">Reference proteome</keyword>
<accession>Q54DG3</accession>
<proteinExistence type="predicted"/>
<sequence>MSQRNSPFKRRQSISNKSATGDVETTTTTPTPTTTTTTTSSLSSSTSSTIQRQPMKIESKISFNFKKRKDPNDNETDNIKLDNEKTFSNKNENNSLPINQLIQLSIDHNNNNNNNNNNNNNNNNNNNNNNNNNNNNNNNNNNNNNNNNNNNNNNNNNNNNNDTQKGTNKNENNCTDSNKKDLSTSTTSSSETGSSTKIKNEAKTPQSCLKKSNNNNNDNNNNNNRKTPRSTKKVKYHENITNDPNFKEENIEKQIKNDTKEIKENIDNKENNLESQIVNINQSTTPIETTSVTSTTSTATTTTTTPIPNEIPPPQQTQPTREKITPSAESKERMILLRNILIEKLKDTPQHLKKHVREINKLFLLQVLKIPIPKEDEQKSIIKKEQQEQQKKLQQQQQQISLANAQSSFLNKPTNNTETPTTTTTTTTTTTTTPSQPIQMPIESIGNLKNLEVLMRIHTLKMLIEKWSEEEKKWKTLLKEYSSNGKESIILQTPSRTKIAATNSIQNSIKKQQKPTKSSSSTSIQQNNQEENDKNINNNNNNNNNNNNSNNVNNNNNNNNNNNNNNNNNNNNNNNQMVSPIISDDPKMIQITNSISKLSIQLDEVKPRLKQVEQNSIDIEKFYDETSVYYQKQSLKNLKDVDNPKKLIKNLLSNNTISLSNK</sequence>
<organism>
    <name type="scientific">Dictyostelium discoideum</name>
    <name type="common">Social amoeba</name>
    <dbReference type="NCBI Taxonomy" id="44689"/>
    <lineage>
        <taxon>Eukaryota</taxon>
        <taxon>Amoebozoa</taxon>
        <taxon>Evosea</taxon>
        <taxon>Eumycetozoa</taxon>
        <taxon>Dictyostelia</taxon>
        <taxon>Dictyosteliales</taxon>
        <taxon>Dictyosteliaceae</taxon>
        <taxon>Dictyostelium</taxon>
    </lineage>
</organism>
<feature type="chain" id="PRO_0000344408" description="Putative uncharacterized protein DDB_G0292292">
    <location>
        <begin position="1"/>
        <end position="662"/>
    </location>
</feature>
<feature type="region of interest" description="Disordered" evidence="1">
    <location>
        <begin position="1"/>
        <end position="94"/>
    </location>
</feature>
<feature type="region of interest" description="Disordered" evidence="1">
    <location>
        <begin position="107"/>
        <end position="237"/>
    </location>
</feature>
<feature type="region of interest" description="Disordered" evidence="1">
    <location>
        <begin position="288"/>
        <end position="328"/>
    </location>
</feature>
<feature type="region of interest" description="Disordered" evidence="1">
    <location>
        <begin position="406"/>
        <end position="440"/>
    </location>
</feature>
<feature type="region of interest" description="Disordered" evidence="1">
    <location>
        <begin position="506"/>
        <end position="580"/>
    </location>
</feature>
<feature type="compositionally biased region" description="Low complexity" evidence="1">
    <location>
        <begin position="25"/>
        <end position="49"/>
    </location>
</feature>
<feature type="compositionally biased region" description="Basic and acidic residues" evidence="1">
    <location>
        <begin position="77"/>
        <end position="87"/>
    </location>
</feature>
<feature type="compositionally biased region" description="Low complexity" evidence="1">
    <location>
        <begin position="109"/>
        <end position="161"/>
    </location>
</feature>
<feature type="compositionally biased region" description="Polar residues" evidence="1">
    <location>
        <begin position="162"/>
        <end position="176"/>
    </location>
</feature>
<feature type="compositionally biased region" description="Low complexity" evidence="1">
    <location>
        <begin position="183"/>
        <end position="196"/>
    </location>
</feature>
<feature type="compositionally biased region" description="Polar residues" evidence="1">
    <location>
        <begin position="203"/>
        <end position="212"/>
    </location>
</feature>
<feature type="compositionally biased region" description="Low complexity" evidence="1">
    <location>
        <begin position="213"/>
        <end position="224"/>
    </location>
</feature>
<feature type="compositionally biased region" description="Basic residues" evidence="1">
    <location>
        <begin position="226"/>
        <end position="235"/>
    </location>
</feature>
<feature type="compositionally biased region" description="Low complexity" evidence="1">
    <location>
        <begin position="288"/>
        <end position="308"/>
    </location>
</feature>
<feature type="compositionally biased region" description="Low complexity" evidence="1">
    <location>
        <begin position="413"/>
        <end position="434"/>
    </location>
</feature>
<feature type="compositionally biased region" description="Low complexity" evidence="1">
    <location>
        <begin position="515"/>
        <end position="526"/>
    </location>
</feature>
<feature type="compositionally biased region" description="Low complexity" evidence="1">
    <location>
        <begin position="535"/>
        <end position="575"/>
    </location>
</feature>
<name>Y4305_DICDI</name>
<dbReference type="EMBL" id="AAFI02000189">
    <property type="protein sequence ID" value="EAL61270.1"/>
    <property type="molecule type" value="Genomic_DNA"/>
</dbReference>
<dbReference type="RefSeq" id="XP_629678.1">
    <property type="nucleotide sequence ID" value="XM_629676.1"/>
</dbReference>
<dbReference type="SMR" id="Q54DG3"/>
<dbReference type="FunCoup" id="Q54DG3">
    <property type="interactions" value="435"/>
</dbReference>
<dbReference type="PaxDb" id="44689-DDB0184305"/>
<dbReference type="EnsemblProtists" id="EAL61270">
    <property type="protein sequence ID" value="EAL61270"/>
    <property type="gene ID" value="DDB_G0292292"/>
</dbReference>
<dbReference type="GeneID" id="8628594"/>
<dbReference type="KEGG" id="ddi:DDB_G0292292"/>
<dbReference type="dictyBase" id="DDB_G0292292"/>
<dbReference type="VEuPathDB" id="AmoebaDB:DDB_G0292292"/>
<dbReference type="eggNOG" id="ENOG502RBV2">
    <property type="taxonomic scope" value="Eukaryota"/>
</dbReference>
<dbReference type="HOGENOM" id="CLU_414732_0_0_1"/>
<dbReference type="InParanoid" id="Q54DG3"/>
<dbReference type="OMA" id="YHINNNE"/>
<dbReference type="PRO" id="PR:Q54DG3"/>
<dbReference type="Proteomes" id="UP000002195">
    <property type="component" value="Chromosome 6"/>
</dbReference>
<reference key="1">
    <citation type="journal article" date="2005" name="Nature">
        <title>The genome of the social amoeba Dictyostelium discoideum.</title>
        <authorList>
            <person name="Eichinger L."/>
            <person name="Pachebat J.A."/>
            <person name="Gloeckner G."/>
            <person name="Rajandream M.A."/>
            <person name="Sucgang R."/>
            <person name="Berriman M."/>
            <person name="Song J."/>
            <person name="Olsen R."/>
            <person name="Szafranski K."/>
            <person name="Xu Q."/>
            <person name="Tunggal B."/>
            <person name="Kummerfeld S."/>
            <person name="Madera M."/>
            <person name="Konfortov B.A."/>
            <person name="Rivero F."/>
            <person name="Bankier A.T."/>
            <person name="Lehmann R."/>
            <person name="Hamlin N."/>
            <person name="Davies R."/>
            <person name="Gaudet P."/>
            <person name="Fey P."/>
            <person name="Pilcher K."/>
            <person name="Chen G."/>
            <person name="Saunders D."/>
            <person name="Sodergren E.J."/>
            <person name="Davis P."/>
            <person name="Kerhornou A."/>
            <person name="Nie X."/>
            <person name="Hall N."/>
            <person name="Anjard C."/>
            <person name="Hemphill L."/>
            <person name="Bason N."/>
            <person name="Farbrother P."/>
            <person name="Desany B."/>
            <person name="Just E."/>
            <person name="Morio T."/>
            <person name="Rost R."/>
            <person name="Churcher C.M."/>
            <person name="Cooper J."/>
            <person name="Haydock S."/>
            <person name="van Driessche N."/>
            <person name="Cronin A."/>
            <person name="Goodhead I."/>
            <person name="Muzny D.M."/>
            <person name="Mourier T."/>
            <person name="Pain A."/>
            <person name="Lu M."/>
            <person name="Harper D."/>
            <person name="Lindsay R."/>
            <person name="Hauser H."/>
            <person name="James K.D."/>
            <person name="Quiles M."/>
            <person name="Madan Babu M."/>
            <person name="Saito T."/>
            <person name="Buchrieser C."/>
            <person name="Wardroper A."/>
            <person name="Felder M."/>
            <person name="Thangavelu M."/>
            <person name="Johnson D."/>
            <person name="Knights A."/>
            <person name="Loulseged H."/>
            <person name="Mungall K.L."/>
            <person name="Oliver K."/>
            <person name="Price C."/>
            <person name="Quail M.A."/>
            <person name="Urushihara H."/>
            <person name="Hernandez J."/>
            <person name="Rabbinowitsch E."/>
            <person name="Steffen D."/>
            <person name="Sanders M."/>
            <person name="Ma J."/>
            <person name="Kohara Y."/>
            <person name="Sharp S."/>
            <person name="Simmonds M.N."/>
            <person name="Spiegler S."/>
            <person name="Tivey A."/>
            <person name="Sugano S."/>
            <person name="White B."/>
            <person name="Walker D."/>
            <person name="Woodward J.R."/>
            <person name="Winckler T."/>
            <person name="Tanaka Y."/>
            <person name="Shaulsky G."/>
            <person name="Schleicher M."/>
            <person name="Weinstock G.M."/>
            <person name="Rosenthal A."/>
            <person name="Cox E.C."/>
            <person name="Chisholm R.L."/>
            <person name="Gibbs R.A."/>
            <person name="Loomis W.F."/>
            <person name="Platzer M."/>
            <person name="Kay R.R."/>
            <person name="Williams J.G."/>
            <person name="Dear P.H."/>
            <person name="Noegel A.A."/>
            <person name="Barrell B.G."/>
            <person name="Kuspa A."/>
        </authorList>
    </citation>
    <scope>NUCLEOTIDE SEQUENCE [LARGE SCALE GENOMIC DNA]</scope>
    <source>
        <strain>AX4</strain>
    </source>
</reference>